<organism>
    <name type="scientific">Drosophila melanogaster</name>
    <name type="common">Fruit fly</name>
    <dbReference type="NCBI Taxonomy" id="7227"/>
    <lineage>
        <taxon>Eukaryota</taxon>
        <taxon>Metazoa</taxon>
        <taxon>Ecdysozoa</taxon>
        <taxon>Arthropoda</taxon>
        <taxon>Hexapoda</taxon>
        <taxon>Insecta</taxon>
        <taxon>Pterygota</taxon>
        <taxon>Neoptera</taxon>
        <taxon>Endopterygota</taxon>
        <taxon>Diptera</taxon>
        <taxon>Brachycera</taxon>
        <taxon>Muscomorpha</taxon>
        <taxon>Ephydroidea</taxon>
        <taxon>Drosophilidae</taxon>
        <taxon>Drosophila</taxon>
        <taxon>Sophophora</taxon>
    </lineage>
</organism>
<accession>P47947</accession>
<accession>Q9V9E1</accession>
<comment type="tissue specificity">
    <text>Present only in adult muscles.</text>
</comment>
<comment type="similarity">
    <text evidence="2">Belongs to the troponin C family.</text>
</comment>
<evidence type="ECO:0000255" key="1">
    <source>
        <dbReference type="PROSITE-ProRule" id="PRU00448"/>
    </source>
</evidence>
<evidence type="ECO:0000305" key="2"/>
<gene>
    <name type="primary">TpnC41C</name>
    <name type="synonym">TnC41C</name>
    <name type="ORF">CG2981</name>
</gene>
<proteinExistence type="evidence at transcript level"/>
<name>TNNC1_DROME</name>
<keyword id="KW-0106">Calcium</keyword>
<keyword id="KW-0479">Metal-binding</keyword>
<keyword id="KW-0514">Muscle protein</keyword>
<keyword id="KW-1185">Reference proteome</keyword>
<keyword id="KW-0677">Repeat</keyword>
<sequence>MSDELTKEQTALLRNAFNAFDPEKNGYINTAMVGTILSMLGHQLDDATLADIIAEVDEDGSGQIEFEEFTTLAARFLVEEDAEAMMAELKEAFRLYDKEGNGYITTGVLREILRELDDKLTNDDLDMMIEEIDSDGSGTVDFDEFMEVMTGGDD</sequence>
<feature type="chain" id="PRO_0000073686" description="Troponin C, isoform 1">
    <location>
        <begin position="1"/>
        <end position="154"/>
    </location>
</feature>
<feature type="domain" description="EF-hand 1" evidence="1">
    <location>
        <begin position="8"/>
        <end position="43"/>
    </location>
</feature>
<feature type="domain" description="EF-hand 2" evidence="1">
    <location>
        <begin position="44"/>
        <end position="79"/>
    </location>
</feature>
<feature type="domain" description="EF-hand 3" evidence="1">
    <location>
        <begin position="84"/>
        <end position="119"/>
    </location>
</feature>
<feature type="domain" description="EF-hand 4" evidence="1">
    <location>
        <begin position="120"/>
        <end position="154"/>
    </location>
</feature>
<feature type="binding site" evidence="1">
    <location>
        <position position="57"/>
    </location>
    <ligand>
        <name>Ca(2+)</name>
        <dbReference type="ChEBI" id="CHEBI:29108"/>
        <label>1</label>
    </ligand>
</feature>
<feature type="binding site" evidence="1">
    <location>
        <position position="59"/>
    </location>
    <ligand>
        <name>Ca(2+)</name>
        <dbReference type="ChEBI" id="CHEBI:29108"/>
        <label>1</label>
    </ligand>
</feature>
<feature type="binding site" evidence="1">
    <location>
        <position position="61"/>
    </location>
    <ligand>
        <name>Ca(2+)</name>
        <dbReference type="ChEBI" id="CHEBI:29108"/>
        <label>1</label>
    </ligand>
</feature>
<feature type="binding site" evidence="1">
    <location>
        <position position="63"/>
    </location>
    <ligand>
        <name>Ca(2+)</name>
        <dbReference type="ChEBI" id="CHEBI:29108"/>
        <label>1</label>
    </ligand>
</feature>
<feature type="binding site" evidence="1">
    <location>
        <position position="68"/>
    </location>
    <ligand>
        <name>Ca(2+)</name>
        <dbReference type="ChEBI" id="CHEBI:29108"/>
        <label>1</label>
    </ligand>
</feature>
<feature type="binding site" evidence="1">
    <location>
        <position position="133"/>
    </location>
    <ligand>
        <name>Ca(2+)</name>
        <dbReference type="ChEBI" id="CHEBI:29108"/>
        <label>2</label>
    </ligand>
</feature>
<feature type="binding site" evidence="1">
    <location>
        <position position="135"/>
    </location>
    <ligand>
        <name>Ca(2+)</name>
        <dbReference type="ChEBI" id="CHEBI:29108"/>
        <label>2</label>
    </ligand>
</feature>
<feature type="binding site" evidence="1">
    <location>
        <position position="137"/>
    </location>
    <ligand>
        <name>Ca(2+)</name>
        <dbReference type="ChEBI" id="CHEBI:29108"/>
        <label>2</label>
    </ligand>
</feature>
<feature type="binding site" evidence="1">
    <location>
        <position position="139"/>
    </location>
    <ligand>
        <name>Ca(2+)</name>
        <dbReference type="ChEBI" id="CHEBI:29108"/>
        <label>2</label>
    </ligand>
</feature>
<feature type="binding site" evidence="1">
    <location>
        <position position="144"/>
    </location>
    <ligand>
        <name>Ca(2+)</name>
        <dbReference type="ChEBI" id="CHEBI:29108"/>
        <label>2</label>
    </ligand>
</feature>
<feature type="sequence conflict" description="In Ref. 1; CAA53628." evidence="2" ref="1">
    <original>A</original>
    <variation>R</variation>
    <location>
        <position position="84"/>
    </location>
</feature>
<feature type="sequence conflict" description="In Ref. 1; CAA53628." evidence="2" ref="1">
    <location>
        <position position="154"/>
    </location>
</feature>
<dbReference type="EMBL" id="X76043">
    <property type="protein sequence ID" value="CAA53628.1"/>
    <property type="molecule type" value="mRNA"/>
</dbReference>
<dbReference type="EMBL" id="AE013599">
    <property type="protein sequence ID" value="AAF57350.1"/>
    <property type="molecule type" value="Genomic_DNA"/>
</dbReference>
<dbReference type="EMBL" id="AY075534">
    <property type="protein sequence ID" value="AAL68341.1"/>
    <property type="molecule type" value="mRNA"/>
</dbReference>
<dbReference type="RefSeq" id="NP_001246139.1">
    <property type="nucleotide sequence ID" value="NM_001259210.1"/>
</dbReference>
<dbReference type="RefSeq" id="NP_523619.2">
    <property type="nucleotide sequence ID" value="NM_078895.4"/>
</dbReference>
<dbReference type="SMR" id="P47947"/>
<dbReference type="BioGRID" id="61394">
    <property type="interactions" value="24"/>
</dbReference>
<dbReference type="DIP" id="DIP-19853N"/>
<dbReference type="IntAct" id="P47947">
    <property type="interactions" value="50"/>
</dbReference>
<dbReference type="STRING" id="7227.FBpp0301709"/>
<dbReference type="PaxDb" id="7227-FBpp0301709"/>
<dbReference type="DNASU" id="35473"/>
<dbReference type="EnsemblMetazoa" id="FBtr0086102">
    <property type="protein sequence ID" value="FBpp0085438"/>
    <property type="gene ID" value="FBgn0013348"/>
</dbReference>
<dbReference type="EnsemblMetazoa" id="FBtr0310003">
    <property type="protein sequence ID" value="FBpp0301709"/>
    <property type="gene ID" value="FBgn0013348"/>
</dbReference>
<dbReference type="GeneID" id="35473"/>
<dbReference type="KEGG" id="dme:Dmel_CG2981"/>
<dbReference type="AGR" id="FB:FBgn0013348"/>
<dbReference type="CTD" id="35473"/>
<dbReference type="FlyBase" id="FBgn0013348">
    <property type="gene designation" value="TpnC41C"/>
</dbReference>
<dbReference type="VEuPathDB" id="VectorBase:FBgn0013348"/>
<dbReference type="eggNOG" id="KOG0027">
    <property type="taxonomic scope" value="Eukaryota"/>
</dbReference>
<dbReference type="GeneTree" id="ENSGT00940000170122"/>
<dbReference type="HOGENOM" id="CLU_061288_2_4_1"/>
<dbReference type="InParanoid" id="P47947"/>
<dbReference type="OMA" id="PQELDMM"/>
<dbReference type="OrthoDB" id="26525at2759"/>
<dbReference type="PhylomeDB" id="P47947"/>
<dbReference type="BioGRID-ORCS" id="35473">
    <property type="hits" value="0 hits in 1 CRISPR screen"/>
</dbReference>
<dbReference type="GenomeRNAi" id="35473"/>
<dbReference type="PRO" id="PR:P47947"/>
<dbReference type="Proteomes" id="UP000000803">
    <property type="component" value="Chromosome 2R"/>
</dbReference>
<dbReference type="Bgee" id="FBgn0013348">
    <property type="expression patterns" value="Expressed in muscle cell in insect leg and 56 other cell types or tissues"/>
</dbReference>
<dbReference type="ExpressionAtlas" id="P47947">
    <property type="expression patterns" value="baseline and differential"/>
</dbReference>
<dbReference type="GO" id="GO:0005813">
    <property type="term" value="C:centrosome"/>
    <property type="evidence" value="ECO:0000318"/>
    <property type="project" value="GO_Central"/>
</dbReference>
<dbReference type="GO" id="GO:0005737">
    <property type="term" value="C:cytoplasm"/>
    <property type="evidence" value="ECO:0000318"/>
    <property type="project" value="GO_Central"/>
</dbReference>
<dbReference type="GO" id="GO:0005509">
    <property type="term" value="F:calcium ion binding"/>
    <property type="evidence" value="ECO:0000318"/>
    <property type="project" value="GO_Central"/>
</dbReference>
<dbReference type="CDD" id="cd00051">
    <property type="entry name" value="EFh"/>
    <property type="match status" value="1"/>
</dbReference>
<dbReference type="FunFam" id="1.10.238.10:FF:000177">
    <property type="entry name" value="Troponin C Ia"/>
    <property type="match status" value="1"/>
</dbReference>
<dbReference type="FunFam" id="1.10.238.10:FF:000103">
    <property type="entry name" value="Troponin C Ib"/>
    <property type="match status" value="1"/>
</dbReference>
<dbReference type="Gene3D" id="1.10.238.10">
    <property type="entry name" value="EF-hand"/>
    <property type="match status" value="2"/>
</dbReference>
<dbReference type="InterPro" id="IPR050230">
    <property type="entry name" value="CALM/Myosin/TropC-like"/>
</dbReference>
<dbReference type="InterPro" id="IPR011992">
    <property type="entry name" value="EF-hand-dom_pair"/>
</dbReference>
<dbReference type="InterPro" id="IPR018247">
    <property type="entry name" value="EF_Hand_1_Ca_BS"/>
</dbReference>
<dbReference type="InterPro" id="IPR002048">
    <property type="entry name" value="EF_hand_dom"/>
</dbReference>
<dbReference type="PANTHER" id="PTHR23048:SF0">
    <property type="entry name" value="CALMODULIN LIKE 3"/>
    <property type="match status" value="1"/>
</dbReference>
<dbReference type="PANTHER" id="PTHR23048">
    <property type="entry name" value="MYOSIN LIGHT CHAIN 1, 3"/>
    <property type="match status" value="1"/>
</dbReference>
<dbReference type="Pfam" id="PF13499">
    <property type="entry name" value="EF-hand_7"/>
    <property type="match status" value="2"/>
</dbReference>
<dbReference type="SMART" id="SM00054">
    <property type="entry name" value="EFh"/>
    <property type="match status" value="4"/>
</dbReference>
<dbReference type="SUPFAM" id="SSF47473">
    <property type="entry name" value="EF-hand"/>
    <property type="match status" value="1"/>
</dbReference>
<dbReference type="PROSITE" id="PS00018">
    <property type="entry name" value="EF_HAND_1"/>
    <property type="match status" value="2"/>
</dbReference>
<dbReference type="PROSITE" id="PS50222">
    <property type="entry name" value="EF_HAND_2"/>
    <property type="match status" value="4"/>
</dbReference>
<reference key="1">
    <citation type="journal article" date="1994" name="Biochem. Genet.">
        <title>Drosophila melanogaster genes encoding three troponin-C isoforms and a calmodulin-related protein.</title>
        <authorList>
            <person name="Fyrberg C."/>
            <person name="Parker H."/>
            <person name="Hutchison B."/>
            <person name="Fyrberg E.A."/>
        </authorList>
    </citation>
    <scope>NUCLEOTIDE SEQUENCE [MRNA]</scope>
</reference>
<reference key="2">
    <citation type="journal article" date="2000" name="Science">
        <title>The genome sequence of Drosophila melanogaster.</title>
        <authorList>
            <person name="Adams M.D."/>
            <person name="Celniker S.E."/>
            <person name="Holt R.A."/>
            <person name="Evans C.A."/>
            <person name="Gocayne J.D."/>
            <person name="Amanatides P.G."/>
            <person name="Scherer S.E."/>
            <person name="Li P.W."/>
            <person name="Hoskins R.A."/>
            <person name="Galle R.F."/>
            <person name="George R.A."/>
            <person name="Lewis S.E."/>
            <person name="Richards S."/>
            <person name="Ashburner M."/>
            <person name="Henderson S.N."/>
            <person name="Sutton G.G."/>
            <person name="Wortman J.R."/>
            <person name="Yandell M.D."/>
            <person name="Zhang Q."/>
            <person name="Chen L.X."/>
            <person name="Brandon R.C."/>
            <person name="Rogers Y.-H.C."/>
            <person name="Blazej R.G."/>
            <person name="Champe M."/>
            <person name="Pfeiffer B.D."/>
            <person name="Wan K.H."/>
            <person name="Doyle C."/>
            <person name="Baxter E.G."/>
            <person name="Helt G."/>
            <person name="Nelson C.R."/>
            <person name="Miklos G.L.G."/>
            <person name="Abril J.F."/>
            <person name="Agbayani A."/>
            <person name="An H.-J."/>
            <person name="Andrews-Pfannkoch C."/>
            <person name="Baldwin D."/>
            <person name="Ballew R.M."/>
            <person name="Basu A."/>
            <person name="Baxendale J."/>
            <person name="Bayraktaroglu L."/>
            <person name="Beasley E.M."/>
            <person name="Beeson K.Y."/>
            <person name="Benos P.V."/>
            <person name="Berman B.P."/>
            <person name="Bhandari D."/>
            <person name="Bolshakov S."/>
            <person name="Borkova D."/>
            <person name="Botchan M.R."/>
            <person name="Bouck J."/>
            <person name="Brokstein P."/>
            <person name="Brottier P."/>
            <person name="Burtis K.C."/>
            <person name="Busam D.A."/>
            <person name="Butler H."/>
            <person name="Cadieu E."/>
            <person name="Center A."/>
            <person name="Chandra I."/>
            <person name="Cherry J.M."/>
            <person name="Cawley S."/>
            <person name="Dahlke C."/>
            <person name="Davenport L.B."/>
            <person name="Davies P."/>
            <person name="de Pablos B."/>
            <person name="Delcher A."/>
            <person name="Deng Z."/>
            <person name="Mays A.D."/>
            <person name="Dew I."/>
            <person name="Dietz S.M."/>
            <person name="Dodson K."/>
            <person name="Doup L.E."/>
            <person name="Downes M."/>
            <person name="Dugan-Rocha S."/>
            <person name="Dunkov B.C."/>
            <person name="Dunn P."/>
            <person name="Durbin K.J."/>
            <person name="Evangelista C.C."/>
            <person name="Ferraz C."/>
            <person name="Ferriera S."/>
            <person name="Fleischmann W."/>
            <person name="Fosler C."/>
            <person name="Gabrielian A.E."/>
            <person name="Garg N.S."/>
            <person name="Gelbart W.M."/>
            <person name="Glasser K."/>
            <person name="Glodek A."/>
            <person name="Gong F."/>
            <person name="Gorrell J.H."/>
            <person name="Gu Z."/>
            <person name="Guan P."/>
            <person name="Harris M."/>
            <person name="Harris N.L."/>
            <person name="Harvey D.A."/>
            <person name="Heiman T.J."/>
            <person name="Hernandez J.R."/>
            <person name="Houck J."/>
            <person name="Hostin D."/>
            <person name="Houston K.A."/>
            <person name="Howland T.J."/>
            <person name="Wei M.-H."/>
            <person name="Ibegwam C."/>
            <person name="Jalali M."/>
            <person name="Kalush F."/>
            <person name="Karpen G.H."/>
            <person name="Ke Z."/>
            <person name="Kennison J.A."/>
            <person name="Ketchum K.A."/>
            <person name="Kimmel B.E."/>
            <person name="Kodira C.D."/>
            <person name="Kraft C.L."/>
            <person name="Kravitz S."/>
            <person name="Kulp D."/>
            <person name="Lai Z."/>
            <person name="Lasko P."/>
            <person name="Lei Y."/>
            <person name="Levitsky A.A."/>
            <person name="Li J.H."/>
            <person name="Li Z."/>
            <person name="Liang Y."/>
            <person name="Lin X."/>
            <person name="Liu X."/>
            <person name="Mattei B."/>
            <person name="McIntosh T.C."/>
            <person name="McLeod M.P."/>
            <person name="McPherson D."/>
            <person name="Merkulov G."/>
            <person name="Milshina N.V."/>
            <person name="Mobarry C."/>
            <person name="Morris J."/>
            <person name="Moshrefi A."/>
            <person name="Mount S.M."/>
            <person name="Moy M."/>
            <person name="Murphy B."/>
            <person name="Murphy L."/>
            <person name="Muzny D.M."/>
            <person name="Nelson D.L."/>
            <person name="Nelson D.R."/>
            <person name="Nelson K.A."/>
            <person name="Nixon K."/>
            <person name="Nusskern D.R."/>
            <person name="Pacleb J.M."/>
            <person name="Palazzolo M."/>
            <person name="Pittman G.S."/>
            <person name="Pan S."/>
            <person name="Pollard J."/>
            <person name="Puri V."/>
            <person name="Reese M.G."/>
            <person name="Reinert K."/>
            <person name="Remington K."/>
            <person name="Saunders R.D.C."/>
            <person name="Scheeler F."/>
            <person name="Shen H."/>
            <person name="Shue B.C."/>
            <person name="Siden-Kiamos I."/>
            <person name="Simpson M."/>
            <person name="Skupski M.P."/>
            <person name="Smith T.J."/>
            <person name="Spier E."/>
            <person name="Spradling A.C."/>
            <person name="Stapleton M."/>
            <person name="Strong R."/>
            <person name="Sun E."/>
            <person name="Svirskas R."/>
            <person name="Tector C."/>
            <person name="Turner R."/>
            <person name="Venter E."/>
            <person name="Wang A.H."/>
            <person name="Wang X."/>
            <person name="Wang Z.-Y."/>
            <person name="Wassarman D.A."/>
            <person name="Weinstock G.M."/>
            <person name="Weissenbach J."/>
            <person name="Williams S.M."/>
            <person name="Woodage T."/>
            <person name="Worley K.C."/>
            <person name="Wu D."/>
            <person name="Yang S."/>
            <person name="Yao Q.A."/>
            <person name="Ye J."/>
            <person name="Yeh R.-F."/>
            <person name="Zaveri J.S."/>
            <person name="Zhan M."/>
            <person name="Zhang G."/>
            <person name="Zhao Q."/>
            <person name="Zheng L."/>
            <person name="Zheng X.H."/>
            <person name="Zhong F.N."/>
            <person name="Zhong W."/>
            <person name="Zhou X."/>
            <person name="Zhu S.C."/>
            <person name="Zhu X."/>
            <person name="Smith H.O."/>
            <person name="Gibbs R.A."/>
            <person name="Myers E.W."/>
            <person name="Rubin G.M."/>
            <person name="Venter J.C."/>
        </authorList>
    </citation>
    <scope>NUCLEOTIDE SEQUENCE [LARGE SCALE GENOMIC DNA]</scope>
    <source>
        <strain>Berkeley</strain>
    </source>
</reference>
<reference key="3">
    <citation type="journal article" date="2002" name="Genome Biol.">
        <title>Annotation of the Drosophila melanogaster euchromatic genome: a systematic review.</title>
        <authorList>
            <person name="Misra S."/>
            <person name="Crosby M.A."/>
            <person name="Mungall C.J."/>
            <person name="Matthews B.B."/>
            <person name="Campbell K.S."/>
            <person name="Hradecky P."/>
            <person name="Huang Y."/>
            <person name="Kaminker J.S."/>
            <person name="Millburn G.H."/>
            <person name="Prochnik S.E."/>
            <person name="Smith C.D."/>
            <person name="Tupy J.L."/>
            <person name="Whitfield E.J."/>
            <person name="Bayraktaroglu L."/>
            <person name="Berman B.P."/>
            <person name="Bettencourt B.R."/>
            <person name="Celniker S.E."/>
            <person name="de Grey A.D.N.J."/>
            <person name="Drysdale R.A."/>
            <person name="Harris N.L."/>
            <person name="Richter J."/>
            <person name="Russo S."/>
            <person name="Schroeder A.J."/>
            <person name="Shu S.Q."/>
            <person name="Stapleton M."/>
            <person name="Yamada C."/>
            <person name="Ashburner M."/>
            <person name="Gelbart W.M."/>
            <person name="Rubin G.M."/>
            <person name="Lewis S.E."/>
        </authorList>
    </citation>
    <scope>GENOME REANNOTATION</scope>
    <source>
        <strain>Berkeley</strain>
    </source>
</reference>
<reference key="4">
    <citation type="journal article" date="2002" name="Genome Biol.">
        <title>A Drosophila full-length cDNA resource.</title>
        <authorList>
            <person name="Stapleton M."/>
            <person name="Carlson J.W."/>
            <person name="Brokstein P."/>
            <person name="Yu C."/>
            <person name="Champe M."/>
            <person name="George R.A."/>
            <person name="Guarin H."/>
            <person name="Kronmiller B."/>
            <person name="Pacleb J.M."/>
            <person name="Park S."/>
            <person name="Wan K.H."/>
            <person name="Rubin G.M."/>
            <person name="Celniker S.E."/>
        </authorList>
    </citation>
    <scope>NUCLEOTIDE SEQUENCE [LARGE SCALE MRNA]</scope>
    <source>
        <strain>Berkeley</strain>
        <tissue>Head</tissue>
    </source>
</reference>
<protein>
    <recommendedName>
        <fullName>Troponin C, isoform 1</fullName>
    </recommendedName>
</protein>